<organism>
    <name type="scientific">Oxyuranus microlepidotus</name>
    <name type="common">Inland taipan</name>
    <name type="synonym">Diemenia microlepidota</name>
    <dbReference type="NCBI Taxonomy" id="111177"/>
    <lineage>
        <taxon>Eukaryota</taxon>
        <taxon>Metazoa</taxon>
        <taxon>Chordata</taxon>
        <taxon>Craniata</taxon>
        <taxon>Vertebrata</taxon>
        <taxon>Euteleostomi</taxon>
        <taxon>Lepidosauria</taxon>
        <taxon>Squamata</taxon>
        <taxon>Bifurcata</taxon>
        <taxon>Unidentata</taxon>
        <taxon>Episquamata</taxon>
        <taxon>Toxicofera</taxon>
        <taxon>Serpentes</taxon>
        <taxon>Colubroidea</taxon>
        <taxon>Elapidae</taxon>
        <taxon>Hydrophiinae</taxon>
        <taxon>Oxyuranus</taxon>
    </lineage>
</organism>
<reference key="1">
    <citation type="journal article" date="2006" name="Biochimie">
        <title>Cloning and characterisation of natriuretic peptides from the venom glands of Australian elapids.</title>
        <authorList>
            <person name="St Pierre L."/>
            <person name="Flight S."/>
            <person name="Masci P.P."/>
            <person name="Hanchard K.J."/>
            <person name="Lewis R.J."/>
            <person name="Alewood P.F."/>
            <person name="de Jersey J."/>
            <person name="Lavin M.F."/>
        </authorList>
    </citation>
    <scope>NUCLEOTIDE SEQUENCE [MRNA]</scope>
    <source>
        <tissue>Venom gland</tissue>
    </source>
</reference>
<reference key="2">
    <citation type="journal article" date="2023" name="Molecules">
        <title>Taipan natriuretic peptides are potent and selective agonists for the natriuretic peptide receptor A.</title>
        <authorList>
            <person name="Vink S."/>
            <person name="Akondi K.B."/>
            <person name="Jin J."/>
            <person name="Poth K."/>
            <person name="Torres A.M."/>
            <person name="Kuchel P.W."/>
            <person name="Burke S.L."/>
            <person name="Head G.A."/>
            <person name="Alewood P.F."/>
        </authorList>
    </citation>
    <scope>FUNCTION</scope>
    <scope>SYNTHESIS</scope>
    <scope>BIOASSAY</scope>
</reference>
<dbReference type="EMBL" id="DQ116723">
    <property type="protein sequence ID" value="AAZ82818.1"/>
    <property type="molecule type" value="mRNA"/>
</dbReference>
<dbReference type="SMR" id="Q3SAF7"/>
<dbReference type="GO" id="GO:0005576">
    <property type="term" value="C:extracellular region"/>
    <property type="evidence" value="ECO:0007669"/>
    <property type="project" value="UniProtKB-SubCell"/>
</dbReference>
<dbReference type="GO" id="GO:0005179">
    <property type="term" value="F:hormone activity"/>
    <property type="evidence" value="ECO:0007669"/>
    <property type="project" value="InterPro"/>
</dbReference>
<dbReference type="GO" id="GO:0090729">
    <property type="term" value="F:toxin activity"/>
    <property type="evidence" value="ECO:0007669"/>
    <property type="project" value="UniProtKB-KW"/>
</dbReference>
<dbReference type="GO" id="GO:0008217">
    <property type="term" value="P:regulation of blood pressure"/>
    <property type="evidence" value="ECO:0007669"/>
    <property type="project" value="UniProtKB-KW"/>
</dbReference>
<dbReference type="GO" id="GO:0042311">
    <property type="term" value="P:vasodilation"/>
    <property type="evidence" value="ECO:0007669"/>
    <property type="project" value="UniProtKB-KW"/>
</dbReference>
<dbReference type="InterPro" id="IPR000663">
    <property type="entry name" value="Natr_peptide"/>
</dbReference>
<dbReference type="InterPro" id="IPR030480">
    <property type="entry name" value="Natr_peptide_CS"/>
</dbReference>
<dbReference type="Pfam" id="PF00212">
    <property type="entry name" value="ANP"/>
    <property type="match status" value="1"/>
</dbReference>
<dbReference type="SMART" id="SM00183">
    <property type="entry name" value="NAT_PEP"/>
    <property type="match status" value="1"/>
</dbReference>
<dbReference type="PROSITE" id="PS00263">
    <property type="entry name" value="NATRIURETIC_PEPTIDE"/>
    <property type="match status" value="1"/>
</dbReference>
<sequence length="40" mass="4065">SDSKIGDGCFGLPLDHIGSVSGLGCNRPVQNRPKQIPGGS</sequence>
<evidence type="ECO:0000250" key="1">
    <source>
        <dbReference type="UniProtKB" id="C6EVG7"/>
    </source>
</evidence>
<evidence type="ECO:0000250" key="2">
    <source>
        <dbReference type="UniProtKB" id="P83228"/>
    </source>
</evidence>
<evidence type="ECO:0000269" key="3">
    <source>
    </source>
</evidence>
<evidence type="ECO:0000303" key="4">
    <source>
    </source>
</evidence>
<evidence type="ECO:0000303" key="5">
    <source>
    </source>
</evidence>
<evidence type="ECO:0000305" key="6"/>
<evidence type="ECO:0000305" key="7">
    <source>
    </source>
</evidence>
<keyword id="KW-1015">Disulfide bond</keyword>
<keyword id="KW-0382">Hypotensive agent</keyword>
<keyword id="KW-0964">Secreted</keyword>
<keyword id="KW-0800">Toxin</keyword>
<keyword id="KW-0838">Vasoactive</keyword>
<keyword id="KW-0840">Vasodilator</keyword>
<name>VNPE_OXYMI</name>
<proteinExistence type="inferred from homology"/>
<protein>
    <recommendedName>
        <fullName evidence="5">Natriuretic peptide TNPe</fullName>
    </recommendedName>
    <alternativeName>
        <fullName evidence="4">Natriuretic peptide OmNP-e</fullName>
    </alternativeName>
</protein>
<comment type="function">
    <text evidence="1 3">Snake venom natriuretic peptide that exhibits vasoactive and hypotensive activity (By similarity). Stimulates cGMP production through the natriuretic peptide receptor 1 (NPR1) with moderate potencies for the rat NPR1 (EC(50)=1800 nM), and very weak potencies over human NPR1 (5% activation at 10 uM) (PubMed:37049825).</text>
</comment>
<comment type="subcellular location">
    <subcellularLocation>
        <location evidence="7">Secreted</location>
    </subcellularLocation>
</comment>
<comment type="tissue specificity">
    <text evidence="7">Expressed by the venom gland.</text>
</comment>
<comment type="similarity">
    <text evidence="6">Belongs to the natriuretic peptide family.</text>
</comment>
<accession>Q3SAF7</accession>
<feature type="peptide" id="PRO_5000140401" description="Natriuretic peptide TNPe" evidence="2">
    <location>
        <begin position="1"/>
        <end position="35"/>
    </location>
</feature>
<feature type="propeptide" id="PRO_0000342419" evidence="2">
    <location>
        <begin position="36"/>
        <end position="40"/>
    </location>
</feature>
<feature type="disulfide bond" evidence="2">
    <location>
        <begin position="9"/>
        <end position="25"/>
    </location>
</feature>